<sequence length="157" mass="17889">MQIHLVFVGKTVFPDVETGIERYVSRLNHYLPTRIHYVKAEKIPPRGMESAVLEKECERILKLIGGKSNQLIVWDRTGKHLDSLEFARVLERLSNGGTGAVWMIIGGPLGISRELRDRANLVLALSEMTFPHDLARLIVAEQLYRAFTIIRGEPYHK</sequence>
<comment type="function">
    <text evidence="1">Specifically methylates the pseudouridine at position 1915 (m3Psi1915) in 23S rRNA.</text>
</comment>
<comment type="catalytic activity">
    <reaction evidence="1">
        <text>pseudouridine(1915) in 23S rRNA + S-adenosyl-L-methionine = N(3)-methylpseudouridine(1915) in 23S rRNA + S-adenosyl-L-homocysteine + H(+)</text>
        <dbReference type="Rhea" id="RHEA:42752"/>
        <dbReference type="Rhea" id="RHEA-COMP:10221"/>
        <dbReference type="Rhea" id="RHEA-COMP:10222"/>
        <dbReference type="ChEBI" id="CHEBI:15378"/>
        <dbReference type="ChEBI" id="CHEBI:57856"/>
        <dbReference type="ChEBI" id="CHEBI:59789"/>
        <dbReference type="ChEBI" id="CHEBI:65314"/>
        <dbReference type="ChEBI" id="CHEBI:74486"/>
        <dbReference type="EC" id="2.1.1.177"/>
    </reaction>
</comment>
<comment type="subunit">
    <text evidence="1">Homodimer.</text>
</comment>
<comment type="subcellular location">
    <subcellularLocation>
        <location evidence="1">Cytoplasm</location>
    </subcellularLocation>
</comment>
<comment type="similarity">
    <text evidence="1">Belongs to the RNA methyltransferase RlmH family.</text>
</comment>
<protein>
    <recommendedName>
        <fullName evidence="1">Ribosomal RNA large subunit methyltransferase H</fullName>
        <ecNumber evidence="1">2.1.1.177</ecNumber>
    </recommendedName>
    <alternativeName>
        <fullName evidence="1">23S rRNA (pseudouridine1915-N3)-methyltransferase</fullName>
    </alternativeName>
    <alternativeName>
        <fullName evidence="1">23S rRNA m3Psi1915 methyltransferase</fullName>
    </alternativeName>
    <alternativeName>
        <fullName evidence="1">rRNA (pseudouridine-N3-)-methyltransferase RlmH</fullName>
    </alternativeName>
</protein>
<keyword id="KW-0963">Cytoplasm</keyword>
<keyword id="KW-0489">Methyltransferase</keyword>
<keyword id="KW-1185">Reference proteome</keyword>
<keyword id="KW-0698">rRNA processing</keyword>
<keyword id="KW-0949">S-adenosyl-L-methionine</keyword>
<keyword id="KW-0808">Transferase</keyword>
<feature type="chain" id="PRO_1000061851" description="Ribosomal RNA large subunit methyltransferase H">
    <location>
        <begin position="1"/>
        <end position="157"/>
    </location>
</feature>
<feature type="binding site" evidence="1">
    <location>
        <position position="106"/>
    </location>
    <ligand>
        <name>S-adenosyl-L-methionine</name>
        <dbReference type="ChEBI" id="CHEBI:59789"/>
    </ligand>
</feature>
<feature type="binding site" evidence="1">
    <location>
        <begin position="125"/>
        <end position="130"/>
    </location>
    <ligand>
        <name>S-adenosyl-L-methionine</name>
        <dbReference type="ChEBI" id="CHEBI:59789"/>
    </ligand>
</feature>
<name>RLMH_SYNFM</name>
<organism>
    <name type="scientific">Syntrophobacter fumaroxidans (strain DSM 10017 / MPOB)</name>
    <dbReference type="NCBI Taxonomy" id="335543"/>
    <lineage>
        <taxon>Bacteria</taxon>
        <taxon>Pseudomonadati</taxon>
        <taxon>Thermodesulfobacteriota</taxon>
        <taxon>Syntrophobacteria</taxon>
        <taxon>Syntrophobacterales</taxon>
        <taxon>Syntrophobacteraceae</taxon>
        <taxon>Syntrophobacter</taxon>
    </lineage>
</organism>
<gene>
    <name evidence="1" type="primary">rlmH</name>
    <name type="ordered locus">Sfum_1420</name>
</gene>
<dbReference type="EC" id="2.1.1.177" evidence="1"/>
<dbReference type="EMBL" id="CP000478">
    <property type="protein sequence ID" value="ABK17111.1"/>
    <property type="molecule type" value="Genomic_DNA"/>
</dbReference>
<dbReference type="RefSeq" id="WP_011698282.1">
    <property type="nucleotide sequence ID" value="NC_008554.1"/>
</dbReference>
<dbReference type="SMR" id="A0LI59"/>
<dbReference type="FunCoup" id="A0LI59">
    <property type="interactions" value="366"/>
</dbReference>
<dbReference type="STRING" id="335543.Sfum_1420"/>
<dbReference type="KEGG" id="sfu:Sfum_1420"/>
<dbReference type="eggNOG" id="COG1576">
    <property type="taxonomic scope" value="Bacteria"/>
</dbReference>
<dbReference type="HOGENOM" id="CLU_100552_0_0_7"/>
<dbReference type="InParanoid" id="A0LI59"/>
<dbReference type="OrthoDB" id="9806643at2"/>
<dbReference type="Proteomes" id="UP000001784">
    <property type="component" value="Chromosome"/>
</dbReference>
<dbReference type="GO" id="GO:0005737">
    <property type="term" value="C:cytoplasm"/>
    <property type="evidence" value="ECO:0007669"/>
    <property type="project" value="UniProtKB-SubCell"/>
</dbReference>
<dbReference type="GO" id="GO:0070038">
    <property type="term" value="F:rRNA (pseudouridine-N3-)-methyltransferase activity"/>
    <property type="evidence" value="ECO:0007669"/>
    <property type="project" value="UniProtKB-UniRule"/>
</dbReference>
<dbReference type="CDD" id="cd18081">
    <property type="entry name" value="RlmH-like"/>
    <property type="match status" value="1"/>
</dbReference>
<dbReference type="Gene3D" id="3.40.1280.10">
    <property type="match status" value="1"/>
</dbReference>
<dbReference type="HAMAP" id="MF_00658">
    <property type="entry name" value="23SrRNA_methyltr_H"/>
    <property type="match status" value="1"/>
</dbReference>
<dbReference type="InterPro" id="IPR029028">
    <property type="entry name" value="Alpha/beta_knot_MTases"/>
</dbReference>
<dbReference type="InterPro" id="IPR003742">
    <property type="entry name" value="RlmH-like"/>
</dbReference>
<dbReference type="InterPro" id="IPR029026">
    <property type="entry name" value="tRNA_m1G_MTases_N"/>
</dbReference>
<dbReference type="PANTHER" id="PTHR33603">
    <property type="entry name" value="METHYLTRANSFERASE"/>
    <property type="match status" value="1"/>
</dbReference>
<dbReference type="PANTHER" id="PTHR33603:SF1">
    <property type="entry name" value="RIBOSOMAL RNA LARGE SUBUNIT METHYLTRANSFERASE H"/>
    <property type="match status" value="1"/>
</dbReference>
<dbReference type="Pfam" id="PF02590">
    <property type="entry name" value="SPOUT_MTase"/>
    <property type="match status" value="1"/>
</dbReference>
<dbReference type="PIRSF" id="PIRSF004505">
    <property type="entry name" value="MT_bac"/>
    <property type="match status" value="1"/>
</dbReference>
<dbReference type="SUPFAM" id="SSF75217">
    <property type="entry name" value="alpha/beta knot"/>
    <property type="match status" value="1"/>
</dbReference>
<evidence type="ECO:0000255" key="1">
    <source>
        <dbReference type="HAMAP-Rule" id="MF_00658"/>
    </source>
</evidence>
<proteinExistence type="inferred from homology"/>
<reference key="1">
    <citation type="submission" date="2006-10" db="EMBL/GenBank/DDBJ databases">
        <title>Complete sequence of Syntrophobacter fumaroxidans MPOB.</title>
        <authorList>
            <consortium name="US DOE Joint Genome Institute"/>
            <person name="Copeland A."/>
            <person name="Lucas S."/>
            <person name="Lapidus A."/>
            <person name="Barry K."/>
            <person name="Detter J.C."/>
            <person name="Glavina del Rio T."/>
            <person name="Hammon N."/>
            <person name="Israni S."/>
            <person name="Pitluck S."/>
            <person name="Goltsman E.G."/>
            <person name="Martinez M."/>
            <person name="Schmutz J."/>
            <person name="Larimer F."/>
            <person name="Land M."/>
            <person name="Hauser L."/>
            <person name="Kyrpides N."/>
            <person name="Kim E."/>
            <person name="Boone D.R."/>
            <person name="Brockman F."/>
            <person name="Culley D."/>
            <person name="Ferry J."/>
            <person name="Gunsalus R."/>
            <person name="McInerney M.J."/>
            <person name="Morrison M."/>
            <person name="Plugge C."/>
            <person name="Rohlin L."/>
            <person name="Scholten J."/>
            <person name="Sieber J."/>
            <person name="Stams A.J.M."/>
            <person name="Worm P."/>
            <person name="Henstra A.M."/>
            <person name="Richardson P."/>
        </authorList>
    </citation>
    <scope>NUCLEOTIDE SEQUENCE [LARGE SCALE GENOMIC DNA]</scope>
    <source>
        <strain>DSM 10017 / MPOB</strain>
    </source>
</reference>
<accession>A0LI59</accession>